<evidence type="ECO:0000250" key="1">
    <source>
        <dbReference type="UniProtKB" id="Q16873"/>
    </source>
</evidence>
<evidence type="ECO:0000305" key="2"/>
<name>LTC4S_BOVIN</name>
<reference key="1">
    <citation type="submission" date="2006-01" db="EMBL/GenBank/DDBJ databases">
        <authorList>
            <consortium name="NIH - Mammalian Gene Collection (MGC) project"/>
        </authorList>
    </citation>
    <scope>NUCLEOTIDE SEQUENCE [LARGE SCALE MRNA]</scope>
    <source>
        <strain>Hereford</strain>
        <tissue>Hypothalamus</tissue>
    </source>
</reference>
<reference key="2">
    <citation type="journal article" date="2005" name="BMC Genomics">
        <title>Characterization of 954 bovine full-CDS cDNA sequences.</title>
        <authorList>
            <person name="Harhay G.P."/>
            <person name="Sonstegard T.S."/>
            <person name="Keele J.W."/>
            <person name="Heaton M.P."/>
            <person name="Clawson M.L."/>
            <person name="Snelling W.M."/>
            <person name="Wiedmann R.T."/>
            <person name="Van Tassell C.P."/>
            <person name="Smith T.P.L."/>
        </authorList>
    </citation>
    <scope>NUCLEOTIDE SEQUENCE [LARGE SCALE MRNA] OF 25-150</scope>
</reference>
<accession>Q2NKS0</accession>
<gene>
    <name type="primary">LTC4S</name>
</gene>
<protein>
    <recommendedName>
        <fullName>Leukotriene C4 synthase</fullName>
        <shortName>LTC4 synthase</shortName>
        <ecNumber evidence="1">4.4.1.20</ecNumber>
    </recommendedName>
    <alternativeName>
        <fullName>Glutathione S-transferase LTC4</fullName>
        <ecNumber evidence="1">2.5.1.-</ecNumber>
    </alternativeName>
    <alternativeName>
        <fullName>Leukotriene-C(4) synthase</fullName>
    </alternativeName>
</protein>
<comment type="function">
    <text evidence="1">Catalyzes the conjugation of leukotriene A4 with reduced glutathione (GSH) to form leukotriene C4 with high specificity. Can also catalyze the transfer of a glutathionyl group from glutathione (GSH) to 13(S),14(S)-epoxy-docosahexaenoic acid to form maresin conjugate in tissue regeneration 1 (MCTR1), a bioactive lipid mediator that possess potent anti-inflammatory and proresolving actions.</text>
</comment>
<comment type="catalytic activity">
    <reaction evidence="1">
        <text>leukotriene C4 = leukotriene A4 + glutathione</text>
        <dbReference type="Rhea" id="RHEA:17617"/>
        <dbReference type="ChEBI" id="CHEBI:57463"/>
        <dbReference type="ChEBI" id="CHEBI:57925"/>
        <dbReference type="ChEBI" id="CHEBI:57973"/>
        <dbReference type="EC" id="4.4.1.20"/>
    </reaction>
    <physiologicalReaction direction="right-to-left" evidence="1">
        <dbReference type="Rhea" id="RHEA:17619"/>
    </physiologicalReaction>
</comment>
<comment type="catalytic activity">
    <reaction evidence="1">
        <text>(13S,14S)-epoxy-(4Z,7Z,9E,11E,16Z,19Z)-docosahexaenoate + glutathione = (13R)-S-glutathionyl-(14S)-hydroxy-(4Z,7Z,9E,11E,16Z,19Z)-docosahexaenoate</text>
        <dbReference type="Rhea" id="RHEA:53508"/>
        <dbReference type="ChEBI" id="CHEBI:57925"/>
        <dbReference type="ChEBI" id="CHEBI:131958"/>
        <dbReference type="ChEBI" id="CHEBI:137407"/>
    </reaction>
    <physiologicalReaction direction="left-to-right" evidence="1">
        <dbReference type="Rhea" id="RHEA:53509"/>
    </physiologicalReaction>
</comment>
<comment type="activity regulation">
    <text evidence="1">Inhibited by MK886.</text>
</comment>
<comment type="pathway">
    <text evidence="1">Lipid metabolism; leukotriene C4 biosynthesis.</text>
</comment>
<comment type="subunit">
    <text evidence="1">Homotrimer. Interacts with ALOX5AP and ALOX5.</text>
</comment>
<comment type="subcellular location">
    <subcellularLocation>
        <location evidence="1">Nucleus outer membrane</location>
        <topology evidence="1">Multi-pass membrane protein</topology>
    </subcellularLocation>
    <subcellularLocation>
        <location evidence="1">Endoplasmic reticulum membrane</location>
        <topology evidence="1">Multi-pass membrane protein</topology>
    </subcellularLocation>
    <subcellularLocation>
        <location evidence="1">Nucleus membrane</location>
        <topology evidence="1">Multi-pass membrane protein</topology>
    </subcellularLocation>
</comment>
<comment type="PTM">
    <text evidence="1">Phosphorylation at Ser-36 by RPS6KB1 inhibits the leukotriene-C4 synthase activity.</text>
</comment>
<comment type="similarity">
    <text evidence="2">Belongs to the MAPEG family.</text>
</comment>
<comment type="sequence caution" evidence="2">
    <conflict type="erroneous termination">
        <sequence resource="EMBL-CDS" id="AAI11677"/>
    </conflict>
    <text>Truncated C-terminus.</text>
</comment>
<keyword id="KW-0256">Endoplasmic reticulum</keyword>
<keyword id="KW-0434">Leukotriene biosynthesis</keyword>
<keyword id="KW-0456">Lyase</keyword>
<keyword id="KW-0472">Membrane</keyword>
<keyword id="KW-0539">Nucleus</keyword>
<keyword id="KW-0597">Phosphoprotein</keyword>
<keyword id="KW-1185">Reference proteome</keyword>
<keyword id="KW-0808">Transferase</keyword>
<keyword id="KW-0812">Transmembrane</keyword>
<keyword id="KW-1133">Transmembrane helix</keyword>
<dbReference type="EC" id="4.4.1.20" evidence="1"/>
<dbReference type="EC" id="2.5.1.-" evidence="1"/>
<dbReference type="EMBL" id="BC111676">
    <property type="protein sequence ID" value="AAI11677.1"/>
    <property type="status" value="ALT_SEQ"/>
    <property type="molecule type" value="mRNA"/>
</dbReference>
<dbReference type="EMBL" id="DN547943">
    <property type="status" value="NOT_ANNOTATED_CDS"/>
    <property type="molecule type" value="mRNA"/>
</dbReference>
<dbReference type="RefSeq" id="NP_001039563.2">
    <property type="nucleotide sequence ID" value="NM_001046098.2"/>
</dbReference>
<dbReference type="SMR" id="Q2NKS0"/>
<dbReference type="FunCoup" id="Q2NKS0">
    <property type="interactions" value="19"/>
</dbReference>
<dbReference type="STRING" id="9913.ENSBTAP00000012836"/>
<dbReference type="PaxDb" id="9913-ENSBTAP00000012836"/>
<dbReference type="GeneID" id="511749"/>
<dbReference type="KEGG" id="bta:511749"/>
<dbReference type="CTD" id="4056"/>
<dbReference type="VEuPathDB" id="HostDB:ENSBTAG00000009737"/>
<dbReference type="eggNOG" id="ENOG502RZYY">
    <property type="taxonomic scope" value="Eukaryota"/>
</dbReference>
<dbReference type="HOGENOM" id="CLU_110291_3_0_1"/>
<dbReference type="InParanoid" id="Q2NKS0"/>
<dbReference type="OMA" id="AGIYFHE"/>
<dbReference type="OrthoDB" id="9620002at2759"/>
<dbReference type="TreeFam" id="TF105328"/>
<dbReference type="Reactome" id="R-BTA-2142688">
    <property type="pathway name" value="Synthesis of 5-eicosatetraenoic acids"/>
</dbReference>
<dbReference type="Reactome" id="R-BTA-2142691">
    <property type="pathway name" value="Synthesis of Leukotrienes (LT) and Eoxins (EX)"/>
</dbReference>
<dbReference type="Reactome" id="R-BTA-2142700">
    <property type="pathway name" value="Biosynthesis of Lipoxins (LX)"/>
</dbReference>
<dbReference type="Reactome" id="R-BTA-9026762">
    <property type="pathway name" value="Biosynthesis of maresin conjugates in tissue regeneration (MCTR)"/>
</dbReference>
<dbReference type="Reactome" id="R-BTA-9026766">
    <property type="pathway name" value="Biosynthesis of protectin and resolvin conjugates in tissue regeneration (PCTR and RCTR)"/>
</dbReference>
<dbReference type="UniPathway" id="UPA00879"/>
<dbReference type="Proteomes" id="UP000009136">
    <property type="component" value="Chromosome 7"/>
</dbReference>
<dbReference type="Bgee" id="ENSBTAG00000009737">
    <property type="expression patterns" value="Expressed in diaphragm and 98 other cell types or tissues"/>
</dbReference>
<dbReference type="GO" id="GO:0005783">
    <property type="term" value="C:endoplasmic reticulum"/>
    <property type="evidence" value="ECO:0000318"/>
    <property type="project" value="GO_Central"/>
</dbReference>
<dbReference type="GO" id="GO:0005789">
    <property type="term" value="C:endoplasmic reticulum membrane"/>
    <property type="evidence" value="ECO:0000250"/>
    <property type="project" value="UniProtKB"/>
</dbReference>
<dbReference type="GO" id="GO:0005635">
    <property type="term" value="C:nuclear envelope"/>
    <property type="evidence" value="ECO:0000318"/>
    <property type="project" value="GO_Central"/>
</dbReference>
<dbReference type="GO" id="GO:0031965">
    <property type="term" value="C:nuclear membrane"/>
    <property type="evidence" value="ECO:0000250"/>
    <property type="project" value="UniProtKB"/>
</dbReference>
<dbReference type="GO" id="GO:0005640">
    <property type="term" value="C:nuclear outer membrane"/>
    <property type="evidence" value="ECO:0000250"/>
    <property type="project" value="UniProtKB"/>
</dbReference>
<dbReference type="GO" id="GO:0008047">
    <property type="term" value="F:enzyme activator activity"/>
    <property type="evidence" value="ECO:0007669"/>
    <property type="project" value="InterPro"/>
</dbReference>
<dbReference type="GO" id="GO:0004602">
    <property type="term" value="F:glutathione peroxidase activity"/>
    <property type="evidence" value="ECO:0000318"/>
    <property type="project" value="GO_Central"/>
</dbReference>
<dbReference type="GO" id="GO:0004364">
    <property type="term" value="F:glutathione transferase activity"/>
    <property type="evidence" value="ECO:0000318"/>
    <property type="project" value="GO_Central"/>
</dbReference>
<dbReference type="GO" id="GO:0004464">
    <property type="term" value="F:leukotriene-C4 synthase activity"/>
    <property type="evidence" value="ECO:0000250"/>
    <property type="project" value="UniProtKB"/>
</dbReference>
<dbReference type="GO" id="GO:0019370">
    <property type="term" value="P:leukotriene biosynthetic process"/>
    <property type="evidence" value="ECO:0000318"/>
    <property type="project" value="GO_Central"/>
</dbReference>
<dbReference type="GO" id="GO:0006691">
    <property type="term" value="P:leukotriene metabolic process"/>
    <property type="evidence" value="ECO:0000250"/>
    <property type="project" value="UniProtKB"/>
</dbReference>
<dbReference type="GO" id="GO:0042759">
    <property type="term" value="P:long-chain fatty acid biosynthetic process"/>
    <property type="evidence" value="ECO:0000250"/>
    <property type="project" value="UniProtKB"/>
</dbReference>
<dbReference type="FunFam" id="1.20.120.550:FF:000003">
    <property type="entry name" value="Leukotriene C4 synthase"/>
    <property type="match status" value="1"/>
</dbReference>
<dbReference type="Gene3D" id="1.20.120.550">
    <property type="entry name" value="Membrane associated eicosanoid/glutathione metabolism-like domain"/>
    <property type="match status" value="1"/>
</dbReference>
<dbReference type="InterPro" id="IPR001446">
    <property type="entry name" value="5_LipOase_AP"/>
</dbReference>
<dbReference type="InterPro" id="IPR050997">
    <property type="entry name" value="MAPEG"/>
</dbReference>
<dbReference type="InterPro" id="IPR023352">
    <property type="entry name" value="MAPEG-like_dom_sf"/>
</dbReference>
<dbReference type="InterPro" id="IPR001129">
    <property type="entry name" value="Membr-assoc_MAPEG"/>
</dbReference>
<dbReference type="PANTHER" id="PTHR10250:SF4">
    <property type="entry name" value="LEUKOTRIENE C4 SYNTHASE"/>
    <property type="match status" value="1"/>
</dbReference>
<dbReference type="PANTHER" id="PTHR10250">
    <property type="entry name" value="MICROSOMAL GLUTATHIONE S-TRANSFERASE"/>
    <property type="match status" value="1"/>
</dbReference>
<dbReference type="Pfam" id="PF01124">
    <property type="entry name" value="MAPEG"/>
    <property type="match status" value="1"/>
</dbReference>
<dbReference type="PRINTS" id="PR00488">
    <property type="entry name" value="5LPOXGNASEAP"/>
</dbReference>
<dbReference type="SUPFAM" id="SSF161084">
    <property type="entry name" value="MAPEG domain-like"/>
    <property type="match status" value="1"/>
</dbReference>
<sequence length="150" mass="16701">MKDEVALLASVTLLGVLLQAYFSLQVISARRAFRVSPPLTTGPPEFERIYRAQVNCSEYFPLFLAMLWVAGIFFHEGAAALCGLVYLFARLRYFQGYARSAQQRLAPLYASARALWLLVALAALGLLAHFLPAELRAALLGQLRKLLLRS</sequence>
<organism>
    <name type="scientific">Bos taurus</name>
    <name type="common">Bovine</name>
    <dbReference type="NCBI Taxonomy" id="9913"/>
    <lineage>
        <taxon>Eukaryota</taxon>
        <taxon>Metazoa</taxon>
        <taxon>Chordata</taxon>
        <taxon>Craniata</taxon>
        <taxon>Vertebrata</taxon>
        <taxon>Euteleostomi</taxon>
        <taxon>Mammalia</taxon>
        <taxon>Eutheria</taxon>
        <taxon>Laurasiatheria</taxon>
        <taxon>Artiodactyla</taxon>
        <taxon>Ruminantia</taxon>
        <taxon>Pecora</taxon>
        <taxon>Bovidae</taxon>
        <taxon>Bovinae</taxon>
        <taxon>Bos</taxon>
    </lineage>
</organism>
<proteinExistence type="evidence at transcript level"/>
<feature type="chain" id="PRO_0000378086" description="Leukotriene C4 synthase">
    <location>
        <begin position="1"/>
        <end position="150"/>
    </location>
</feature>
<feature type="topological domain" description="Cytoplasmic" evidence="1">
    <location>
        <begin position="1"/>
        <end position="6"/>
    </location>
</feature>
<feature type="transmembrane region" description="Helical" evidence="1">
    <location>
        <begin position="7"/>
        <end position="27"/>
    </location>
</feature>
<feature type="topological domain" description="Lumenal" evidence="1">
    <location>
        <begin position="28"/>
        <end position="48"/>
    </location>
</feature>
<feature type="transmembrane region" description="Helical" evidence="1">
    <location>
        <begin position="49"/>
        <end position="69"/>
    </location>
</feature>
<feature type="topological domain" description="Cytoplasmic" evidence="1">
    <location>
        <begin position="70"/>
        <end position="73"/>
    </location>
</feature>
<feature type="transmembrane region" description="Helical" evidence="1">
    <location>
        <begin position="74"/>
        <end position="94"/>
    </location>
</feature>
<feature type="topological domain" description="Lumenal" evidence="1">
    <location>
        <begin position="95"/>
        <end position="104"/>
    </location>
</feature>
<feature type="transmembrane region" description="Helical" evidence="1">
    <location>
        <begin position="105"/>
        <end position="124"/>
    </location>
</feature>
<feature type="topological domain" description="Cytoplasmic" evidence="1">
    <location>
        <begin position="125"/>
        <end position="150"/>
    </location>
</feature>
<feature type="active site" description="Proton donor" evidence="1">
    <location>
        <position position="31"/>
    </location>
</feature>
<feature type="active site" description="Proton acceptor" evidence="1">
    <location>
        <position position="104"/>
    </location>
</feature>
<feature type="binding site" evidence="1">
    <location>
        <position position="30"/>
    </location>
    <ligand>
        <name>glutathione</name>
        <dbReference type="ChEBI" id="CHEBI:57925"/>
    </ligand>
</feature>
<feature type="binding site" evidence="1">
    <location>
        <begin position="51"/>
        <end position="55"/>
    </location>
    <ligand>
        <name>glutathione</name>
        <dbReference type="ChEBI" id="CHEBI:57925"/>
    </ligand>
</feature>
<feature type="binding site" evidence="1">
    <location>
        <begin position="58"/>
        <end position="59"/>
    </location>
    <ligand>
        <name>glutathione</name>
        <dbReference type="ChEBI" id="CHEBI:57925"/>
    </ligand>
</feature>
<feature type="binding site" evidence="1">
    <location>
        <begin position="93"/>
        <end position="97"/>
    </location>
    <ligand>
        <name>glutathione</name>
        <dbReference type="ChEBI" id="CHEBI:57925"/>
    </ligand>
</feature>
<feature type="modified residue" description="Phosphoserine" evidence="1">
    <location>
        <position position="36"/>
    </location>
</feature>